<name>ISCR_YERPN</name>
<feature type="chain" id="PRO_0000268937" description="HTH-type transcriptional regulator IscR">
    <location>
        <begin position="1"/>
        <end position="164"/>
    </location>
</feature>
<feature type="domain" description="HTH rrf2-type" evidence="1">
    <location>
        <begin position="2"/>
        <end position="131"/>
    </location>
</feature>
<feature type="DNA-binding region" description="H-T-H motif" evidence="1">
    <location>
        <begin position="28"/>
        <end position="51"/>
    </location>
</feature>
<feature type="region of interest" description="Disordered" evidence="2">
    <location>
        <begin position="143"/>
        <end position="164"/>
    </location>
</feature>
<feature type="compositionally biased region" description="Polar residues" evidence="2">
    <location>
        <begin position="152"/>
        <end position="164"/>
    </location>
</feature>
<feature type="binding site" evidence="1">
    <location>
        <position position="92"/>
    </location>
    <ligand>
        <name>[2Fe-2S] cluster</name>
        <dbReference type="ChEBI" id="CHEBI:190135"/>
    </ligand>
</feature>
<feature type="binding site" evidence="1">
    <location>
        <position position="98"/>
    </location>
    <ligand>
        <name>[2Fe-2S] cluster</name>
        <dbReference type="ChEBI" id="CHEBI:190135"/>
    </ligand>
</feature>
<feature type="binding site" evidence="1">
    <location>
        <position position="104"/>
    </location>
    <ligand>
        <name>[2Fe-2S] cluster</name>
        <dbReference type="ChEBI" id="CHEBI:190135"/>
    </ligand>
</feature>
<organism>
    <name type="scientific">Yersinia pestis bv. Antiqua (strain Nepal516)</name>
    <dbReference type="NCBI Taxonomy" id="377628"/>
    <lineage>
        <taxon>Bacteria</taxon>
        <taxon>Pseudomonadati</taxon>
        <taxon>Pseudomonadota</taxon>
        <taxon>Gammaproteobacteria</taxon>
        <taxon>Enterobacterales</taxon>
        <taxon>Yersiniaceae</taxon>
        <taxon>Yersinia</taxon>
    </lineage>
</organism>
<protein>
    <recommendedName>
        <fullName evidence="1">HTH-type transcriptional regulator IscR</fullName>
    </recommendedName>
</protein>
<sequence>MRLTSKGRYAVTAMLDVALHSQDGPVPLADISERQGISLSYLEQLFSRLRKNGLVASVRGPGGGYLLGKDASAIAVGAVITAVDESVDATRCQGKEGCQGGNRCLTHTLWRDLSERISSFLNNITLAELVNNQDILEVADRQNNDTRRTANGRPQETINVNLRA</sequence>
<gene>
    <name evidence="1" type="primary">iscR</name>
    <name type="ordered locus">YPN_1240</name>
    <name type="ORF">YP516_1360</name>
</gene>
<proteinExistence type="inferred from homology"/>
<comment type="function">
    <text evidence="1">Regulates the transcription of several operons and genes involved in the biogenesis of Fe-S clusters and Fe-S-containing proteins.</text>
</comment>
<comment type="cofactor">
    <cofactor evidence="1">
        <name>[2Fe-2S] cluster</name>
        <dbReference type="ChEBI" id="CHEBI:190135"/>
    </cofactor>
    <text evidence="1">Binds 1 [2Fe-2S] cluster.</text>
</comment>
<accession>Q1CKB0</accession>
<accession>C4GRI9</accession>
<keyword id="KW-0001">2Fe-2S</keyword>
<keyword id="KW-0010">Activator</keyword>
<keyword id="KW-0238">DNA-binding</keyword>
<keyword id="KW-0408">Iron</keyword>
<keyword id="KW-0411">Iron-sulfur</keyword>
<keyword id="KW-0479">Metal-binding</keyword>
<keyword id="KW-0678">Repressor</keyword>
<keyword id="KW-0804">Transcription</keyword>
<keyword id="KW-0805">Transcription regulation</keyword>
<reference key="1">
    <citation type="journal article" date="2006" name="J. Bacteriol.">
        <title>Complete genome sequence of Yersinia pestis strains Antiqua and Nepal516: evidence of gene reduction in an emerging pathogen.</title>
        <authorList>
            <person name="Chain P.S.G."/>
            <person name="Hu P."/>
            <person name="Malfatti S.A."/>
            <person name="Radnedge L."/>
            <person name="Larimer F."/>
            <person name="Vergez L.M."/>
            <person name="Worsham P."/>
            <person name="Chu M.C."/>
            <person name="Andersen G.L."/>
        </authorList>
    </citation>
    <scope>NUCLEOTIDE SEQUENCE [LARGE SCALE GENOMIC DNA]</scope>
    <source>
        <strain>Nepal516</strain>
    </source>
</reference>
<reference key="2">
    <citation type="submission" date="2009-04" db="EMBL/GenBank/DDBJ databases">
        <title>Yersinia pestis Nepal516A whole genome shotgun sequencing project.</title>
        <authorList>
            <person name="Plunkett G. III"/>
            <person name="Anderson B.D."/>
            <person name="Baumler D.J."/>
            <person name="Burland V."/>
            <person name="Cabot E.L."/>
            <person name="Glasner J.D."/>
            <person name="Mau B."/>
            <person name="Neeno-Eckwall E."/>
            <person name="Perna N.T."/>
            <person name="Munk A.C."/>
            <person name="Tapia R."/>
            <person name="Green L.D."/>
            <person name="Rogers Y.C."/>
            <person name="Detter J.C."/>
            <person name="Bruce D.C."/>
            <person name="Brettin T.S."/>
        </authorList>
    </citation>
    <scope>NUCLEOTIDE SEQUENCE [LARGE SCALE GENOMIC DNA]</scope>
    <source>
        <strain>Nepal516</strain>
    </source>
</reference>
<evidence type="ECO:0000255" key="1">
    <source>
        <dbReference type="HAMAP-Rule" id="MF_01176"/>
    </source>
</evidence>
<evidence type="ECO:0000256" key="2">
    <source>
        <dbReference type="SAM" id="MobiDB-lite"/>
    </source>
</evidence>
<dbReference type="EMBL" id="CP000305">
    <property type="protein sequence ID" value="ABG17570.1"/>
    <property type="molecule type" value="Genomic_DNA"/>
</dbReference>
<dbReference type="EMBL" id="ACNQ01000008">
    <property type="protein sequence ID" value="EEO77680.1"/>
    <property type="molecule type" value="Genomic_DNA"/>
</dbReference>
<dbReference type="RefSeq" id="WP_002222202.1">
    <property type="nucleotide sequence ID" value="NZ_ACNQ01000008.1"/>
</dbReference>
<dbReference type="SMR" id="Q1CKB0"/>
<dbReference type="GeneID" id="96662219"/>
<dbReference type="KEGG" id="ypn:YPN_1240"/>
<dbReference type="HOGENOM" id="CLU_107144_0_0_6"/>
<dbReference type="Proteomes" id="UP000008936">
    <property type="component" value="Chromosome"/>
</dbReference>
<dbReference type="GO" id="GO:0005829">
    <property type="term" value="C:cytosol"/>
    <property type="evidence" value="ECO:0007669"/>
    <property type="project" value="TreeGrafter"/>
</dbReference>
<dbReference type="GO" id="GO:0051537">
    <property type="term" value="F:2 iron, 2 sulfur cluster binding"/>
    <property type="evidence" value="ECO:0007669"/>
    <property type="project" value="UniProtKB-KW"/>
</dbReference>
<dbReference type="GO" id="GO:0003700">
    <property type="term" value="F:DNA-binding transcription factor activity"/>
    <property type="evidence" value="ECO:0007669"/>
    <property type="project" value="UniProtKB-UniRule"/>
</dbReference>
<dbReference type="GO" id="GO:0003690">
    <property type="term" value="F:double-stranded DNA binding"/>
    <property type="evidence" value="ECO:0007669"/>
    <property type="project" value="UniProtKB-UniRule"/>
</dbReference>
<dbReference type="GO" id="GO:0005506">
    <property type="term" value="F:iron ion binding"/>
    <property type="evidence" value="ECO:0007669"/>
    <property type="project" value="UniProtKB-UniRule"/>
</dbReference>
<dbReference type="FunFam" id="1.10.10.10:FF:000026">
    <property type="entry name" value="HTH-type transcriptional regulator IscR"/>
    <property type="match status" value="1"/>
</dbReference>
<dbReference type="Gene3D" id="1.10.10.10">
    <property type="entry name" value="Winged helix-like DNA-binding domain superfamily/Winged helix DNA-binding domain"/>
    <property type="match status" value="1"/>
</dbReference>
<dbReference type="HAMAP" id="MF_01176">
    <property type="entry name" value="HTH_type_IscR"/>
    <property type="match status" value="1"/>
</dbReference>
<dbReference type="InterPro" id="IPR010242">
    <property type="entry name" value="TF_HTH_IscR"/>
</dbReference>
<dbReference type="InterPro" id="IPR030489">
    <property type="entry name" value="TR_Rrf2-type_CS"/>
</dbReference>
<dbReference type="InterPro" id="IPR000944">
    <property type="entry name" value="Tscrpt_reg_Rrf2"/>
</dbReference>
<dbReference type="InterPro" id="IPR036388">
    <property type="entry name" value="WH-like_DNA-bd_sf"/>
</dbReference>
<dbReference type="InterPro" id="IPR036390">
    <property type="entry name" value="WH_DNA-bd_sf"/>
</dbReference>
<dbReference type="NCBIfam" id="TIGR02010">
    <property type="entry name" value="IscR"/>
    <property type="match status" value="1"/>
</dbReference>
<dbReference type="NCBIfam" id="NF008110">
    <property type="entry name" value="PRK10857.1"/>
    <property type="match status" value="1"/>
</dbReference>
<dbReference type="NCBIfam" id="TIGR00738">
    <property type="entry name" value="rrf2_super"/>
    <property type="match status" value="1"/>
</dbReference>
<dbReference type="PANTHER" id="PTHR33221:SF5">
    <property type="entry name" value="HTH-TYPE TRANSCRIPTIONAL REGULATOR ISCR"/>
    <property type="match status" value="1"/>
</dbReference>
<dbReference type="PANTHER" id="PTHR33221">
    <property type="entry name" value="WINGED HELIX-TURN-HELIX TRANSCRIPTIONAL REGULATOR, RRF2 FAMILY"/>
    <property type="match status" value="1"/>
</dbReference>
<dbReference type="Pfam" id="PF02082">
    <property type="entry name" value="Rrf2"/>
    <property type="match status" value="1"/>
</dbReference>
<dbReference type="SUPFAM" id="SSF46785">
    <property type="entry name" value="Winged helix' DNA-binding domain"/>
    <property type="match status" value="1"/>
</dbReference>
<dbReference type="PROSITE" id="PS01332">
    <property type="entry name" value="HTH_RRF2_1"/>
    <property type="match status" value="1"/>
</dbReference>
<dbReference type="PROSITE" id="PS51197">
    <property type="entry name" value="HTH_RRF2_2"/>
    <property type="match status" value="1"/>
</dbReference>